<dbReference type="EC" id="2.4.2.9" evidence="1"/>
<dbReference type="EMBL" id="CP000308">
    <property type="protein sequence ID" value="ABG14229.1"/>
    <property type="molecule type" value="Genomic_DNA"/>
</dbReference>
<dbReference type="RefSeq" id="WP_002209776.1">
    <property type="nucleotide sequence ID" value="NZ_CP009906.1"/>
</dbReference>
<dbReference type="SMR" id="Q1C5P3"/>
<dbReference type="GeneID" id="96666287"/>
<dbReference type="KEGG" id="ypa:YPA_2264"/>
<dbReference type="UniPathway" id="UPA00574">
    <property type="reaction ID" value="UER00636"/>
</dbReference>
<dbReference type="Proteomes" id="UP000001971">
    <property type="component" value="Chromosome"/>
</dbReference>
<dbReference type="GO" id="GO:0005525">
    <property type="term" value="F:GTP binding"/>
    <property type="evidence" value="ECO:0007669"/>
    <property type="project" value="UniProtKB-KW"/>
</dbReference>
<dbReference type="GO" id="GO:0000287">
    <property type="term" value="F:magnesium ion binding"/>
    <property type="evidence" value="ECO:0007669"/>
    <property type="project" value="UniProtKB-UniRule"/>
</dbReference>
<dbReference type="GO" id="GO:0004845">
    <property type="term" value="F:uracil phosphoribosyltransferase activity"/>
    <property type="evidence" value="ECO:0007669"/>
    <property type="project" value="UniProtKB-UniRule"/>
</dbReference>
<dbReference type="GO" id="GO:0044206">
    <property type="term" value="P:UMP salvage"/>
    <property type="evidence" value="ECO:0007669"/>
    <property type="project" value="UniProtKB-UniRule"/>
</dbReference>
<dbReference type="GO" id="GO:0006223">
    <property type="term" value="P:uracil salvage"/>
    <property type="evidence" value="ECO:0007669"/>
    <property type="project" value="InterPro"/>
</dbReference>
<dbReference type="CDD" id="cd06223">
    <property type="entry name" value="PRTases_typeI"/>
    <property type="match status" value="1"/>
</dbReference>
<dbReference type="FunFam" id="3.40.50.2020:FF:000003">
    <property type="entry name" value="Uracil phosphoribosyltransferase"/>
    <property type="match status" value="1"/>
</dbReference>
<dbReference type="Gene3D" id="3.40.50.2020">
    <property type="match status" value="1"/>
</dbReference>
<dbReference type="HAMAP" id="MF_01218_B">
    <property type="entry name" value="Upp_B"/>
    <property type="match status" value="1"/>
</dbReference>
<dbReference type="InterPro" id="IPR000836">
    <property type="entry name" value="PRibTrfase_dom"/>
</dbReference>
<dbReference type="InterPro" id="IPR029057">
    <property type="entry name" value="PRTase-like"/>
</dbReference>
<dbReference type="InterPro" id="IPR034332">
    <property type="entry name" value="Upp_B"/>
</dbReference>
<dbReference type="InterPro" id="IPR050054">
    <property type="entry name" value="UPRTase/APRTase"/>
</dbReference>
<dbReference type="InterPro" id="IPR005765">
    <property type="entry name" value="Ura_phspho_trans"/>
</dbReference>
<dbReference type="NCBIfam" id="NF001097">
    <property type="entry name" value="PRK00129.1"/>
    <property type="match status" value="1"/>
</dbReference>
<dbReference type="NCBIfam" id="TIGR01091">
    <property type="entry name" value="upp"/>
    <property type="match status" value="1"/>
</dbReference>
<dbReference type="PANTHER" id="PTHR32315">
    <property type="entry name" value="ADENINE PHOSPHORIBOSYLTRANSFERASE"/>
    <property type="match status" value="1"/>
</dbReference>
<dbReference type="PANTHER" id="PTHR32315:SF4">
    <property type="entry name" value="URACIL PHOSPHORIBOSYLTRANSFERASE, CHLOROPLASTIC"/>
    <property type="match status" value="1"/>
</dbReference>
<dbReference type="Pfam" id="PF14681">
    <property type="entry name" value="UPRTase"/>
    <property type="match status" value="1"/>
</dbReference>
<dbReference type="SUPFAM" id="SSF53271">
    <property type="entry name" value="PRTase-like"/>
    <property type="match status" value="1"/>
</dbReference>
<comment type="function">
    <text evidence="1">Catalyzes the conversion of uracil and 5-phospho-alpha-D-ribose 1-diphosphate (PRPP) to UMP and diphosphate.</text>
</comment>
<comment type="catalytic activity">
    <reaction evidence="1">
        <text>UMP + diphosphate = 5-phospho-alpha-D-ribose 1-diphosphate + uracil</text>
        <dbReference type="Rhea" id="RHEA:13017"/>
        <dbReference type="ChEBI" id="CHEBI:17568"/>
        <dbReference type="ChEBI" id="CHEBI:33019"/>
        <dbReference type="ChEBI" id="CHEBI:57865"/>
        <dbReference type="ChEBI" id="CHEBI:58017"/>
        <dbReference type="EC" id="2.4.2.9"/>
    </reaction>
</comment>
<comment type="cofactor">
    <cofactor evidence="1">
        <name>Mg(2+)</name>
        <dbReference type="ChEBI" id="CHEBI:18420"/>
    </cofactor>
    <text evidence="1">Binds 1 Mg(2+) ion per subunit. The magnesium is bound as Mg-PRPP.</text>
</comment>
<comment type="activity regulation">
    <text evidence="1">Allosterically activated by GTP.</text>
</comment>
<comment type="pathway">
    <text evidence="1">Pyrimidine metabolism; UMP biosynthesis via salvage pathway; UMP from uracil: step 1/1.</text>
</comment>
<comment type="similarity">
    <text evidence="1">Belongs to the UPRTase family.</text>
</comment>
<keyword id="KW-0021">Allosteric enzyme</keyword>
<keyword id="KW-0328">Glycosyltransferase</keyword>
<keyword id="KW-0342">GTP-binding</keyword>
<keyword id="KW-0460">Magnesium</keyword>
<keyword id="KW-0547">Nucleotide-binding</keyword>
<keyword id="KW-0808">Transferase</keyword>
<evidence type="ECO:0000255" key="1">
    <source>
        <dbReference type="HAMAP-Rule" id="MF_01218"/>
    </source>
</evidence>
<protein>
    <recommendedName>
        <fullName evidence="1">Uracil phosphoribosyltransferase</fullName>
        <ecNumber evidence="1">2.4.2.9</ecNumber>
    </recommendedName>
    <alternativeName>
        <fullName evidence="1">UMP pyrophosphorylase</fullName>
    </alternativeName>
    <alternativeName>
        <fullName evidence="1">UPRTase</fullName>
    </alternativeName>
</protein>
<reference key="1">
    <citation type="journal article" date="2006" name="J. Bacteriol.">
        <title>Complete genome sequence of Yersinia pestis strains Antiqua and Nepal516: evidence of gene reduction in an emerging pathogen.</title>
        <authorList>
            <person name="Chain P.S.G."/>
            <person name="Hu P."/>
            <person name="Malfatti S.A."/>
            <person name="Radnedge L."/>
            <person name="Larimer F."/>
            <person name="Vergez L.M."/>
            <person name="Worsham P."/>
            <person name="Chu M.C."/>
            <person name="Andersen G.L."/>
        </authorList>
    </citation>
    <scope>NUCLEOTIDE SEQUENCE [LARGE SCALE GENOMIC DNA]</scope>
    <source>
        <strain>Antiqua</strain>
    </source>
</reference>
<sequence>MKIVEVKHPLVKHKLGLMRENDISTKRFRELASEVGSLLTYVATADLETETVTIEGWNGPVEIEQIKGKKITVVPILRAGLGMMEGVLENVPSARISVVGVYRDEETLKPVPYFQKLVSNINERMALVVDPMLATGGSMIATIDLLKKAGCQSIKVLVLVAAPEGIKALEEAHPDVELYTASIDQGLNEHGYIIPGLGDAGDKIFGTK</sequence>
<proteinExistence type="inferred from homology"/>
<organism>
    <name type="scientific">Yersinia pestis bv. Antiqua (strain Antiqua)</name>
    <dbReference type="NCBI Taxonomy" id="360102"/>
    <lineage>
        <taxon>Bacteria</taxon>
        <taxon>Pseudomonadati</taxon>
        <taxon>Pseudomonadota</taxon>
        <taxon>Gammaproteobacteria</taxon>
        <taxon>Enterobacterales</taxon>
        <taxon>Yersiniaceae</taxon>
        <taxon>Yersinia</taxon>
    </lineage>
</organism>
<name>UPP_YERPA</name>
<feature type="chain" id="PRO_1000053814" description="Uracil phosphoribosyltransferase">
    <location>
        <begin position="1"/>
        <end position="208"/>
    </location>
</feature>
<feature type="binding site" evidence="1">
    <location>
        <position position="78"/>
    </location>
    <ligand>
        <name>5-phospho-alpha-D-ribose 1-diphosphate</name>
        <dbReference type="ChEBI" id="CHEBI:58017"/>
    </ligand>
</feature>
<feature type="binding site" evidence="1">
    <location>
        <position position="103"/>
    </location>
    <ligand>
        <name>5-phospho-alpha-D-ribose 1-diphosphate</name>
        <dbReference type="ChEBI" id="CHEBI:58017"/>
    </ligand>
</feature>
<feature type="binding site" evidence="1">
    <location>
        <begin position="130"/>
        <end position="138"/>
    </location>
    <ligand>
        <name>5-phospho-alpha-D-ribose 1-diphosphate</name>
        <dbReference type="ChEBI" id="CHEBI:58017"/>
    </ligand>
</feature>
<feature type="binding site" evidence="1">
    <location>
        <position position="193"/>
    </location>
    <ligand>
        <name>uracil</name>
        <dbReference type="ChEBI" id="CHEBI:17568"/>
    </ligand>
</feature>
<feature type="binding site" evidence="1">
    <location>
        <begin position="198"/>
        <end position="200"/>
    </location>
    <ligand>
        <name>uracil</name>
        <dbReference type="ChEBI" id="CHEBI:17568"/>
    </ligand>
</feature>
<feature type="binding site" evidence="1">
    <location>
        <position position="199"/>
    </location>
    <ligand>
        <name>5-phospho-alpha-D-ribose 1-diphosphate</name>
        <dbReference type="ChEBI" id="CHEBI:58017"/>
    </ligand>
</feature>
<accession>Q1C5P3</accession>
<gene>
    <name evidence="1" type="primary">upp</name>
    <name type="ordered locus">YPA_2264</name>
</gene>